<comment type="function">
    <text evidence="2 3">Probably part of the ABC transporter DppBCDE involved in dipeptide transport (Probable). Responsible for the translocation of the substrate across the membrane (Probable).</text>
</comment>
<comment type="subcellular location">
    <subcellularLocation>
        <location evidence="2">Cell membrane</location>
        <topology evidence="1">Multi-pass membrane protein</topology>
    </subcellularLocation>
</comment>
<comment type="developmental stage">
    <text>Expressed early during sporulation.</text>
</comment>
<comment type="induction">
    <text>Nutrient deficiency conditions, which also induce sporulation.</text>
</comment>
<comment type="similarity">
    <text evidence="2">Belongs to the binding-protein-dependent transport system permease family. OppBC subfamily.</text>
</comment>
<comment type="sequence caution" evidence="2">
    <conflict type="miscellaneous discrepancy">
        <sequence resource="EMBL-CDS" id="AAA22823"/>
    </conflict>
    <text>Sequencing errors.</text>
</comment>
<evidence type="ECO:0000255" key="1">
    <source>
        <dbReference type="PROSITE-ProRule" id="PRU00441"/>
    </source>
</evidence>
<evidence type="ECO:0000305" key="2"/>
<evidence type="ECO:0000305" key="3">
    <source>
    </source>
</evidence>
<reference key="1">
    <citation type="journal article" date="1991" name="Mol. Microbiol.">
        <title>A Bacillus subtilis dipeptide transport system expressed early during sporulation.</title>
        <authorList>
            <person name="Mathiopoulos C."/>
            <person name="Mueller J.P."/>
            <person name="Slack F.J."/>
            <person name="Murphy C.G."/>
            <person name="Patankar S."/>
            <person name="Bukusoglu G."/>
            <person name="Sonenshein A.L."/>
        </authorList>
    </citation>
    <scope>NUCLEOTIDE SEQUENCE [GENOMIC DNA]</scope>
    <scope>FUNCTION</scope>
    <source>
        <strain>168</strain>
    </source>
</reference>
<reference key="2">
    <citation type="submission" date="1997-11" db="EMBL/GenBank/DDBJ databases">
        <title>Sequence of the Bacillus subtilis genome between xlyA and ykoR.</title>
        <authorList>
            <person name="Devine K.M."/>
        </authorList>
    </citation>
    <scope>NUCLEOTIDE SEQUENCE [GENOMIC DNA]</scope>
    <source>
        <strain>168</strain>
    </source>
</reference>
<reference key="3">
    <citation type="journal article" date="1997" name="Nature">
        <title>The complete genome sequence of the Gram-positive bacterium Bacillus subtilis.</title>
        <authorList>
            <person name="Kunst F."/>
            <person name="Ogasawara N."/>
            <person name="Moszer I."/>
            <person name="Albertini A.M."/>
            <person name="Alloni G."/>
            <person name="Azevedo V."/>
            <person name="Bertero M.G."/>
            <person name="Bessieres P."/>
            <person name="Bolotin A."/>
            <person name="Borchert S."/>
            <person name="Borriss R."/>
            <person name="Boursier L."/>
            <person name="Brans A."/>
            <person name="Braun M."/>
            <person name="Brignell S.C."/>
            <person name="Bron S."/>
            <person name="Brouillet S."/>
            <person name="Bruschi C.V."/>
            <person name="Caldwell B."/>
            <person name="Capuano V."/>
            <person name="Carter N.M."/>
            <person name="Choi S.-K."/>
            <person name="Codani J.-J."/>
            <person name="Connerton I.F."/>
            <person name="Cummings N.J."/>
            <person name="Daniel R.A."/>
            <person name="Denizot F."/>
            <person name="Devine K.M."/>
            <person name="Duesterhoeft A."/>
            <person name="Ehrlich S.D."/>
            <person name="Emmerson P.T."/>
            <person name="Entian K.-D."/>
            <person name="Errington J."/>
            <person name="Fabret C."/>
            <person name="Ferrari E."/>
            <person name="Foulger D."/>
            <person name="Fritz C."/>
            <person name="Fujita M."/>
            <person name="Fujita Y."/>
            <person name="Fuma S."/>
            <person name="Galizzi A."/>
            <person name="Galleron N."/>
            <person name="Ghim S.-Y."/>
            <person name="Glaser P."/>
            <person name="Goffeau A."/>
            <person name="Golightly E.J."/>
            <person name="Grandi G."/>
            <person name="Guiseppi G."/>
            <person name="Guy B.J."/>
            <person name="Haga K."/>
            <person name="Haiech J."/>
            <person name="Harwood C.R."/>
            <person name="Henaut A."/>
            <person name="Hilbert H."/>
            <person name="Holsappel S."/>
            <person name="Hosono S."/>
            <person name="Hullo M.-F."/>
            <person name="Itaya M."/>
            <person name="Jones L.-M."/>
            <person name="Joris B."/>
            <person name="Karamata D."/>
            <person name="Kasahara Y."/>
            <person name="Klaerr-Blanchard M."/>
            <person name="Klein C."/>
            <person name="Kobayashi Y."/>
            <person name="Koetter P."/>
            <person name="Koningstein G."/>
            <person name="Krogh S."/>
            <person name="Kumano M."/>
            <person name="Kurita K."/>
            <person name="Lapidus A."/>
            <person name="Lardinois S."/>
            <person name="Lauber J."/>
            <person name="Lazarevic V."/>
            <person name="Lee S.-M."/>
            <person name="Levine A."/>
            <person name="Liu H."/>
            <person name="Masuda S."/>
            <person name="Mauel C."/>
            <person name="Medigue C."/>
            <person name="Medina N."/>
            <person name="Mellado R.P."/>
            <person name="Mizuno M."/>
            <person name="Moestl D."/>
            <person name="Nakai S."/>
            <person name="Noback M."/>
            <person name="Noone D."/>
            <person name="O'Reilly M."/>
            <person name="Ogawa K."/>
            <person name="Ogiwara A."/>
            <person name="Oudega B."/>
            <person name="Park S.-H."/>
            <person name="Parro V."/>
            <person name="Pohl T.M."/>
            <person name="Portetelle D."/>
            <person name="Porwollik S."/>
            <person name="Prescott A.M."/>
            <person name="Presecan E."/>
            <person name="Pujic P."/>
            <person name="Purnelle B."/>
            <person name="Rapoport G."/>
            <person name="Rey M."/>
            <person name="Reynolds S."/>
            <person name="Rieger M."/>
            <person name="Rivolta C."/>
            <person name="Rocha E."/>
            <person name="Roche B."/>
            <person name="Rose M."/>
            <person name="Sadaie Y."/>
            <person name="Sato T."/>
            <person name="Scanlan E."/>
            <person name="Schleich S."/>
            <person name="Schroeter R."/>
            <person name="Scoffone F."/>
            <person name="Sekiguchi J."/>
            <person name="Sekowska A."/>
            <person name="Seror S.J."/>
            <person name="Serror P."/>
            <person name="Shin B.-S."/>
            <person name="Soldo B."/>
            <person name="Sorokin A."/>
            <person name="Tacconi E."/>
            <person name="Takagi T."/>
            <person name="Takahashi H."/>
            <person name="Takemaru K."/>
            <person name="Takeuchi M."/>
            <person name="Tamakoshi A."/>
            <person name="Tanaka T."/>
            <person name="Terpstra P."/>
            <person name="Tognoni A."/>
            <person name="Tosato V."/>
            <person name="Uchiyama S."/>
            <person name="Vandenbol M."/>
            <person name="Vannier F."/>
            <person name="Vassarotti A."/>
            <person name="Viari A."/>
            <person name="Wambutt R."/>
            <person name="Wedler E."/>
            <person name="Wedler H."/>
            <person name="Weitzenegger T."/>
            <person name="Winters P."/>
            <person name="Wipat A."/>
            <person name="Yamamoto H."/>
            <person name="Yamane K."/>
            <person name="Yasumoto K."/>
            <person name="Yata K."/>
            <person name="Yoshida K."/>
            <person name="Yoshikawa H.-F."/>
            <person name="Zumstein E."/>
            <person name="Yoshikawa H."/>
            <person name="Danchin A."/>
        </authorList>
    </citation>
    <scope>NUCLEOTIDE SEQUENCE [LARGE SCALE GENOMIC DNA]</scope>
    <source>
        <strain>168</strain>
    </source>
</reference>
<reference key="4">
    <citation type="journal article" date="1988" name="Gene">
        <title>Characterization of signal-sequence-coding regions selected from the Bacillus subtilis chromosome.</title>
        <authorList>
            <person name="Smith H."/>
            <person name="de Jong A."/>
            <person name="Bron S."/>
            <person name="Venema G."/>
        </authorList>
    </citation>
    <scope>NUCLEOTIDE SEQUENCE [GENOMIC DNA] OF 46-85</scope>
</reference>
<name>DPPC_BACSU</name>
<gene>
    <name type="primary">dppC</name>
    <name type="synonym">dciAC</name>
    <name type="ordered locus">BSU12940</name>
</gene>
<proteinExistence type="evidence at transcript level"/>
<organism>
    <name type="scientific">Bacillus subtilis (strain 168)</name>
    <dbReference type="NCBI Taxonomy" id="224308"/>
    <lineage>
        <taxon>Bacteria</taxon>
        <taxon>Bacillati</taxon>
        <taxon>Bacillota</taxon>
        <taxon>Bacilli</taxon>
        <taxon>Bacillales</taxon>
        <taxon>Bacillaceae</taxon>
        <taxon>Bacillus</taxon>
    </lineage>
</organism>
<protein>
    <recommendedName>
        <fullName>Dipeptide transport system permease protein DppC</fullName>
    </recommendedName>
</protein>
<keyword id="KW-1003">Cell membrane</keyword>
<keyword id="KW-0472">Membrane</keyword>
<keyword id="KW-0571">Peptide transport</keyword>
<keyword id="KW-0653">Protein transport</keyword>
<keyword id="KW-1185">Reference proteome</keyword>
<keyword id="KW-0749">Sporulation</keyword>
<keyword id="KW-0812">Transmembrane</keyword>
<keyword id="KW-1133">Transmembrane helix</keyword>
<keyword id="KW-0813">Transport</keyword>
<sequence length="320" mass="35803">MNLPVQTDERQPEQHNQVPDEWFVLNQEKNREADSVKRPSLSYTQDAWRRLKKNKLAMAGLFILLFLFVMAVIGPFLSPHSVVRQSLTEQNLPPSADHWFGTDELGRDVFTRTWYGARISLFVGVMAALIDFLIGVIYGGVAGYKGGRIDSIMMRIIEVLYGLPYLLVVILLMVLMGPGLGTIIVALTVTGWVGMARIVRGQVLQIKNYEYVLASKTFGAKTFRIIRKNLLPNTMGAIIVQMTLTVPAAIFAESFLSFLGLGIQAPFASWGVMANDGLPTILSGHWWRLFFPAFFISLTMYAFNVLGDGLQDALDPKLRR</sequence>
<feature type="chain" id="PRO_0000060004" description="Dipeptide transport system permease protein DppC">
    <location>
        <begin position="1"/>
        <end position="320"/>
    </location>
</feature>
<feature type="transmembrane region" description="Helical" evidence="1">
    <location>
        <begin position="56"/>
        <end position="76"/>
    </location>
</feature>
<feature type="transmembrane region" description="Helical" evidence="1">
    <location>
        <begin position="121"/>
        <end position="141"/>
    </location>
</feature>
<feature type="transmembrane region" description="Helical" evidence="1">
    <location>
        <begin position="154"/>
        <end position="176"/>
    </location>
</feature>
<feature type="transmembrane region" description="Helical" evidence="1">
    <location>
        <begin position="230"/>
        <end position="252"/>
    </location>
</feature>
<feature type="transmembrane region" description="Helical" evidence="1">
    <location>
        <begin position="267"/>
        <end position="287"/>
    </location>
</feature>
<feature type="transmembrane region" description="Helical" evidence="1">
    <location>
        <begin position="289"/>
        <end position="309"/>
    </location>
</feature>
<feature type="domain" description="ABC transmembrane type-1" evidence="1">
    <location>
        <begin position="117"/>
        <end position="307"/>
    </location>
</feature>
<feature type="sequence conflict" description="In Ref. 1; CAA40004." evidence="2" ref="1">
    <original>P</original>
    <variation>R</variation>
    <location>
        <position position="232"/>
    </location>
</feature>
<feature type="sequence conflict" description="In Ref. 1; CAA40004." evidence="2" ref="1">
    <original>L</original>
    <variation>S</variation>
    <location>
        <position position="298"/>
    </location>
</feature>
<dbReference type="EMBL" id="X56678">
    <property type="protein sequence ID" value="CAA40004.1"/>
    <property type="molecule type" value="Genomic_DNA"/>
</dbReference>
<dbReference type="EMBL" id="AJ002571">
    <property type="protein sequence ID" value="CAA05574.1"/>
    <property type="molecule type" value="Genomic_DNA"/>
</dbReference>
<dbReference type="EMBL" id="AL009126">
    <property type="protein sequence ID" value="CAB13151.1"/>
    <property type="molecule type" value="Genomic_DNA"/>
</dbReference>
<dbReference type="EMBL" id="M22907">
    <property type="protein sequence ID" value="AAA22823.1"/>
    <property type="status" value="ALT_SEQ"/>
    <property type="molecule type" value="Genomic_DNA"/>
</dbReference>
<dbReference type="PIR" id="S16649">
    <property type="entry name" value="S16649"/>
</dbReference>
<dbReference type="RefSeq" id="NP_389177.1">
    <property type="nucleotide sequence ID" value="NC_000964.3"/>
</dbReference>
<dbReference type="RefSeq" id="WP_003245702.1">
    <property type="nucleotide sequence ID" value="NZ_OZ025638.1"/>
</dbReference>
<dbReference type="SMR" id="P26904"/>
<dbReference type="FunCoup" id="P26904">
    <property type="interactions" value="500"/>
</dbReference>
<dbReference type="STRING" id="224308.BSU12940"/>
<dbReference type="TCDB" id="3.A.1.5.2">
    <property type="family name" value="the atp-binding cassette (abc) superfamily"/>
</dbReference>
<dbReference type="PaxDb" id="224308-BSU12940"/>
<dbReference type="EnsemblBacteria" id="CAB13151">
    <property type="protein sequence ID" value="CAB13151"/>
    <property type="gene ID" value="BSU_12940"/>
</dbReference>
<dbReference type="GeneID" id="938038"/>
<dbReference type="KEGG" id="bsu:BSU12940"/>
<dbReference type="PATRIC" id="fig|224308.179.peg.1406"/>
<dbReference type="eggNOG" id="COG1173">
    <property type="taxonomic scope" value="Bacteria"/>
</dbReference>
<dbReference type="InParanoid" id="P26904"/>
<dbReference type="OrthoDB" id="9797472at2"/>
<dbReference type="PhylomeDB" id="P26904"/>
<dbReference type="BioCyc" id="BSUB:BSU12940-MONOMER"/>
<dbReference type="Proteomes" id="UP000001570">
    <property type="component" value="Chromosome"/>
</dbReference>
<dbReference type="GO" id="GO:0005886">
    <property type="term" value="C:plasma membrane"/>
    <property type="evidence" value="ECO:0000318"/>
    <property type="project" value="GO_Central"/>
</dbReference>
<dbReference type="GO" id="GO:0022857">
    <property type="term" value="F:transmembrane transporter activity"/>
    <property type="evidence" value="ECO:0000318"/>
    <property type="project" value="GO_Central"/>
</dbReference>
<dbReference type="GO" id="GO:0015833">
    <property type="term" value="P:peptide transport"/>
    <property type="evidence" value="ECO:0007669"/>
    <property type="project" value="UniProtKB-KW"/>
</dbReference>
<dbReference type="GO" id="GO:0015031">
    <property type="term" value="P:protein transport"/>
    <property type="evidence" value="ECO:0007669"/>
    <property type="project" value="UniProtKB-KW"/>
</dbReference>
<dbReference type="GO" id="GO:0030435">
    <property type="term" value="P:sporulation resulting in formation of a cellular spore"/>
    <property type="evidence" value="ECO:0007669"/>
    <property type="project" value="UniProtKB-KW"/>
</dbReference>
<dbReference type="CDD" id="cd06261">
    <property type="entry name" value="TM_PBP2"/>
    <property type="match status" value="1"/>
</dbReference>
<dbReference type="Gene3D" id="1.10.3720.10">
    <property type="entry name" value="MetI-like"/>
    <property type="match status" value="1"/>
</dbReference>
<dbReference type="InterPro" id="IPR050366">
    <property type="entry name" value="BP-dependent_transpt_permease"/>
</dbReference>
<dbReference type="InterPro" id="IPR000515">
    <property type="entry name" value="MetI-like"/>
</dbReference>
<dbReference type="InterPro" id="IPR035906">
    <property type="entry name" value="MetI-like_sf"/>
</dbReference>
<dbReference type="InterPro" id="IPR025966">
    <property type="entry name" value="OppC_N"/>
</dbReference>
<dbReference type="PANTHER" id="PTHR43386">
    <property type="entry name" value="OLIGOPEPTIDE TRANSPORT SYSTEM PERMEASE PROTEIN APPC"/>
    <property type="match status" value="1"/>
</dbReference>
<dbReference type="PANTHER" id="PTHR43386:SF22">
    <property type="entry name" value="OLIGOPEPTIDE TRANSPORT SYSTEM PERMEASE PROTEIN OPPC"/>
    <property type="match status" value="1"/>
</dbReference>
<dbReference type="Pfam" id="PF00528">
    <property type="entry name" value="BPD_transp_1"/>
    <property type="match status" value="1"/>
</dbReference>
<dbReference type="Pfam" id="PF12911">
    <property type="entry name" value="OppC_N"/>
    <property type="match status" value="1"/>
</dbReference>
<dbReference type="SUPFAM" id="SSF161098">
    <property type="entry name" value="MetI-like"/>
    <property type="match status" value="1"/>
</dbReference>
<dbReference type="PROSITE" id="PS50928">
    <property type="entry name" value="ABC_TM1"/>
    <property type="match status" value="1"/>
</dbReference>
<accession>P26904</accession>
<accession>O34373</accession>
<accession>Q45678</accession>